<keyword id="KW-0002">3D-structure</keyword>
<keyword id="KW-1185">Reference proteome</keyword>
<keyword id="KW-0687">Ribonucleoprotein</keyword>
<keyword id="KW-0689">Ribosomal protein</keyword>
<gene>
    <name evidence="1" type="primary">rpsP</name>
    <name type="ordered locus">PA3745</name>
</gene>
<comment type="similarity">
    <text evidence="1">Belongs to the bacterial ribosomal protein bS16 family.</text>
</comment>
<organism>
    <name type="scientific">Pseudomonas aeruginosa (strain ATCC 15692 / DSM 22644 / CIP 104116 / JCM 14847 / LMG 12228 / 1C / PRS 101 / PAO1)</name>
    <dbReference type="NCBI Taxonomy" id="208964"/>
    <lineage>
        <taxon>Bacteria</taxon>
        <taxon>Pseudomonadati</taxon>
        <taxon>Pseudomonadota</taxon>
        <taxon>Gammaproteobacteria</taxon>
        <taxon>Pseudomonadales</taxon>
        <taxon>Pseudomonadaceae</taxon>
        <taxon>Pseudomonas</taxon>
    </lineage>
</organism>
<name>RS16_PSEAE</name>
<reference key="1">
    <citation type="journal article" date="2000" name="Nature">
        <title>Complete genome sequence of Pseudomonas aeruginosa PAO1, an opportunistic pathogen.</title>
        <authorList>
            <person name="Stover C.K."/>
            <person name="Pham X.-Q.T."/>
            <person name="Erwin A.L."/>
            <person name="Mizoguchi S.D."/>
            <person name="Warrener P."/>
            <person name="Hickey M.J."/>
            <person name="Brinkman F.S.L."/>
            <person name="Hufnagle W.O."/>
            <person name="Kowalik D.J."/>
            <person name="Lagrou M."/>
            <person name="Garber R.L."/>
            <person name="Goltry L."/>
            <person name="Tolentino E."/>
            <person name="Westbrock-Wadman S."/>
            <person name="Yuan Y."/>
            <person name="Brody L.L."/>
            <person name="Coulter S.N."/>
            <person name="Folger K.R."/>
            <person name="Kas A."/>
            <person name="Larbig K."/>
            <person name="Lim R.M."/>
            <person name="Smith K.A."/>
            <person name="Spencer D.H."/>
            <person name="Wong G.K.-S."/>
            <person name="Wu Z."/>
            <person name="Paulsen I.T."/>
            <person name="Reizer J."/>
            <person name="Saier M.H. Jr."/>
            <person name="Hancock R.E.W."/>
            <person name="Lory S."/>
            <person name="Olson M.V."/>
        </authorList>
    </citation>
    <scope>NUCLEOTIDE SEQUENCE [LARGE SCALE GENOMIC DNA]</scope>
    <source>
        <strain>ATCC 15692 / DSM 22644 / CIP 104116 / JCM 14847 / LMG 12228 / 1C / PRS 101 / PAO1</strain>
    </source>
</reference>
<protein>
    <recommendedName>
        <fullName evidence="1">Small ribosomal subunit protein bS16</fullName>
    </recommendedName>
    <alternativeName>
        <fullName evidence="2">30S ribosomal protein S16</fullName>
    </alternativeName>
</protein>
<evidence type="ECO:0000255" key="1">
    <source>
        <dbReference type="HAMAP-Rule" id="MF_00385"/>
    </source>
</evidence>
<evidence type="ECO:0000305" key="2"/>
<feature type="chain" id="PRO_0000167226" description="Small ribosomal subunit protein bS16">
    <location>
        <begin position="1"/>
        <end position="83"/>
    </location>
</feature>
<sequence>MVTIRLARGGSKKRPFYHLTVTNSRNARDGRFVERIGFFNPVATGGEVRLSVDQERATYWLGQGAQPSERVAQLLKDAAKANA</sequence>
<dbReference type="EMBL" id="AE004091">
    <property type="protein sequence ID" value="AAG07132.1"/>
    <property type="molecule type" value="Genomic_DNA"/>
</dbReference>
<dbReference type="PIR" id="E83178">
    <property type="entry name" value="E83178"/>
</dbReference>
<dbReference type="RefSeq" id="NP_252434.1">
    <property type="nucleotide sequence ID" value="NC_002516.2"/>
</dbReference>
<dbReference type="RefSeq" id="WP_003092643.1">
    <property type="nucleotide sequence ID" value="NZ_QZGE01000001.1"/>
</dbReference>
<dbReference type="PDB" id="7UNR">
    <property type="method" value="EM"/>
    <property type="resolution" value="2.90 A"/>
    <property type="chains" value="p=1-83"/>
</dbReference>
<dbReference type="PDB" id="7UNU">
    <property type="method" value="EM"/>
    <property type="resolution" value="2.90 A"/>
    <property type="chains" value="p=1-83"/>
</dbReference>
<dbReference type="PDB" id="7UNV">
    <property type="method" value="EM"/>
    <property type="resolution" value="2.70 A"/>
    <property type="chains" value="p=1-83"/>
</dbReference>
<dbReference type="PDB" id="7UNW">
    <property type="method" value="EM"/>
    <property type="resolution" value="2.60 A"/>
    <property type="chains" value="p=1-83"/>
</dbReference>
<dbReference type="PDB" id="8CD1">
    <property type="method" value="EM"/>
    <property type="resolution" value="3.00 A"/>
    <property type="chains" value="p=1-83"/>
</dbReference>
<dbReference type="PDB" id="8RWG">
    <property type="method" value="EM"/>
    <property type="resolution" value="2.46 A"/>
    <property type="chains" value="o=1-83"/>
</dbReference>
<dbReference type="PDBsum" id="7UNR"/>
<dbReference type="PDBsum" id="7UNU"/>
<dbReference type="PDBsum" id="7UNV"/>
<dbReference type="PDBsum" id="7UNW"/>
<dbReference type="PDBsum" id="8CD1"/>
<dbReference type="PDBsum" id="8RWG"/>
<dbReference type="EMDB" id="EMD-16566"/>
<dbReference type="EMDB" id="EMD-19547"/>
<dbReference type="EMDB" id="EMD-26630"/>
<dbReference type="EMDB" id="EMD-26633"/>
<dbReference type="EMDB" id="EMD-26634"/>
<dbReference type="EMDB" id="EMD-26635"/>
<dbReference type="SMR" id="Q9HXP9"/>
<dbReference type="FunCoup" id="Q9HXP9">
    <property type="interactions" value="770"/>
</dbReference>
<dbReference type="STRING" id="208964.PA3745"/>
<dbReference type="PaxDb" id="208964-PA3745"/>
<dbReference type="GeneID" id="77219761"/>
<dbReference type="GeneID" id="880510"/>
<dbReference type="KEGG" id="pae:PA3745"/>
<dbReference type="PATRIC" id="fig|208964.12.peg.3917"/>
<dbReference type="PseudoCAP" id="PA3745"/>
<dbReference type="HOGENOM" id="CLU_100590_5_1_6"/>
<dbReference type="InParanoid" id="Q9HXP9"/>
<dbReference type="OrthoDB" id="9807878at2"/>
<dbReference type="PhylomeDB" id="Q9HXP9"/>
<dbReference type="BioCyc" id="PAER208964:G1FZ6-3816-MONOMER"/>
<dbReference type="PRO" id="PR:Q9HXP9"/>
<dbReference type="Proteomes" id="UP000002438">
    <property type="component" value="Chromosome"/>
</dbReference>
<dbReference type="GO" id="GO:0005737">
    <property type="term" value="C:cytoplasm"/>
    <property type="evidence" value="ECO:0007669"/>
    <property type="project" value="UniProtKB-ARBA"/>
</dbReference>
<dbReference type="GO" id="GO:0015935">
    <property type="term" value="C:small ribosomal subunit"/>
    <property type="evidence" value="ECO:0000318"/>
    <property type="project" value="GO_Central"/>
</dbReference>
<dbReference type="GO" id="GO:0003735">
    <property type="term" value="F:structural constituent of ribosome"/>
    <property type="evidence" value="ECO:0000318"/>
    <property type="project" value="GO_Central"/>
</dbReference>
<dbReference type="GO" id="GO:0006412">
    <property type="term" value="P:translation"/>
    <property type="evidence" value="ECO:0007669"/>
    <property type="project" value="UniProtKB-UniRule"/>
</dbReference>
<dbReference type="FunFam" id="3.30.1320.10:FF:000001">
    <property type="entry name" value="30S ribosomal protein S16"/>
    <property type="match status" value="1"/>
</dbReference>
<dbReference type="Gene3D" id="3.30.1320.10">
    <property type="match status" value="1"/>
</dbReference>
<dbReference type="HAMAP" id="MF_00385">
    <property type="entry name" value="Ribosomal_bS16"/>
    <property type="match status" value="1"/>
</dbReference>
<dbReference type="InterPro" id="IPR000307">
    <property type="entry name" value="Ribosomal_bS16"/>
</dbReference>
<dbReference type="InterPro" id="IPR023803">
    <property type="entry name" value="Ribosomal_bS16_dom_sf"/>
</dbReference>
<dbReference type="NCBIfam" id="TIGR00002">
    <property type="entry name" value="S16"/>
    <property type="match status" value="1"/>
</dbReference>
<dbReference type="PANTHER" id="PTHR12919">
    <property type="entry name" value="30S RIBOSOMAL PROTEIN S16"/>
    <property type="match status" value="1"/>
</dbReference>
<dbReference type="PANTHER" id="PTHR12919:SF20">
    <property type="entry name" value="SMALL RIBOSOMAL SUBUNIT PROTEIN BS16M"/>
    <property type="match status" value="1"/>
</dbReference>
<dbReference type="Pfam" id="PF00886">
    <property type="entry name" value="Ribosomal_S16"/>
    <property type="match status" value="1"/>
</dbReference>
<dbReference type="SUPFAM" id="SSF54565">
    <property type="entry name" value="Ribosomal protein S16"/>
    <property type="match status" value="1"/>
</dbReference>
<proteinExistence type="evidence at protein level"/>
<accession>Q9HXP9</accession>